<protein>
    <recommendedName>
        <fullName>Transcription initiation factor IIA subunit 2</fullName>
    </recommendedName>
    <alternativeName>
        <fullName>General transcription factor IIA subunit 2</fullName>
    </alternativeName>
    <alternativeName>
        <fullName>Transcription initiation factor IIA gamma chain</fullName>
        <shortName>TFIIA-gamma</shortName>
    </alternativeName>
</protein>
<gene>
    <name type="ORF">Smp_071830</name>
</gene>
<evidence type="ECO:0000250" key="1"/>
<evidence type="ECO:0000305" key="2"/>
<proteinExistence type="inferred from homology"/>
<reference key="1">
    <citation type="journal article" date="2009" name="Nature">
        <title>The genome of the blood fluke Schistosoma mansoni.</title>
        <authorList>
            <person name="Berriman M."/>
            <person name="Haas B.J."/>
            <person name="LoVerde P.T."/>
            <person name="Wilson R.A."/>
            <person name="Dillon G.P."/>
            <person name="Cerqueira G.C."/>
            <person name="Mashiyama S.T."/>
            <person name="Al-Lazikani B."/>
            <person name="Andrade L.F."/>
            <person name="Ashton P.D."/>
            <person name="Aslett M.A."/>
            <person name="Bartholomeu D.C."/>
            <person name="Blandin G."/>
            <person name="Caffrey C.R."/>
            <person name="Coghlan A."/>
            <person name="Coulson R."/>
            <person name="Day T.A."/>
            <person name="Delcher A."/>
            <person name="DeMarco R."/>
            <person name="Djikeng A."/>
            <person name="Eyre T."/>
            <person name="Gamble J.A."/>
            <person name="Ghedin E."/>
            <person name="Gu Y."/>
            <person name="Hertz-Fowler C."/>
            <person name="Hirai H."/>
            <person name="Hirai Y."/>
            <person name="Houston R."/>
            <person name="Ivens A."/>
            <person name="Johnston D.A."/>
            <person name="Lacerda D."/>
            <person name="Macedo C.D."/>
            <person name="McVeigh P."/>
            <person name="Ning Z."/>
            <person name="Oliveira G."/>
            <person name="Overington J.P."/>
            <person name="Parkhill J."/>
            <person name="Pertea M."/>
            <person name="Pierce R.J."/>
            <person name="Protasio A.V."/>
            <person name="Quail M.A."/>
            <person name="Rajandream M.A."/>
            <person name="Rogers J."/>
            <person name="Sajid M."/>
            <person name="Salzberg S.L."/>
            <person name="Stanke M."/>
            <person name="Tivey A.R."/>
            <person name="White O."/>
            <person name="Williams D.L."/>
            <person name="Wortman J."/>
            <person name="Wu W."/>
            <person name="Zamanian M."/>
            <person name="Zerlotini A."/>
            <person name="Fraser-Liggett C.M."/>
            <person name="Barrell B.G."/>
            <person name="El-Sayed N.M."/>
        </authorList>
    </citation>
    <scope>NUCLEOTIDE SEQUENCE [LARGE SCALE GENOMIC DNA]</scope>
    <source>
        <strain>Puerto Rican</strain>
    </source>
</reference>
<reference key="2">
    <citation type="journal article" date="2012" name="PLoS Negl. Trop. Dis.">
        <title>A systematically improved high quality genome and transcriptome of the human blood fluke Schistosoma mansoni.</title>
        <authorList>
            <person name="Protasio A.V."/>
            <person name="Tsai I.J."/>
            <person name="Babbage A."/>
            <person name="Nichol S."/>
            <person name="Hunt M."/>
            <person name="Aslett M.A."/>
            <person name="De Silva N."/>
            <person name="Velarde G.S."/>
            <person name="Anderson T.J."/>
            <person name="Clark R.C."/>
            <person name="Davidson C."/>
            <person name="Dillon G.P."/>
            <person name="Holroyd N.E."/>
            <person name="LoVerde P.T."/>
            <person name="Lloyd C."/>
            <person name="McQuillan J."/>
            <person name="Oliveira G."/>
            <person name="Otto T.D."/>
            <person name="Parker-Manuel S.J."/>
            <person name="Quail M.A."/>
            <person name="Wilson R.A."/>
            <person name="Zerlotini A."/>
            <person name="Dunne D.W."/>
            <person name="Berriman M."/>
        </authorList>
    </citation>
    <scope>NUCLEOTIDE SEQUENCE [LARGE SCALE GENOMIC DNA]</scope>
    <source>
        <strain>Puerto Rican</strain>
    </source>
</reference>
<feature type="chain" id="PRO_0000406205" description="Transcription initiation factor IIA subunit 2">
    <location>
        <begin position="1"/>
        <end position="104"/>
    </location>
</feature>
<sequence length="104" mass="11941">MTYHEMYRSTTLGTTLREALDEMLAHNLLQPGMDHKVMQKFDQCISNALAKRVKNRLSLRGHLNTYRNCDNVWTLVMNDVEIKDSSAIMTVDKVSLNSPLICKI</sequence>
<dbReference type="EMBL" id="HE601625">
    <property type="protein sequence ID" value="CCD77760.1"/>
    <property type="status" value="ALT_SEQ"/>
    <property type="molecule type" value="Genomic_DNA"/>
</dbReference>
<dbReference type="RefSeq" id="XP_018650380.1">
    <property type="nucleotide sequence ID" value="XM_018796137.1"/>
</dbReference>
<dbReference type="SMR" id="C4QGM3"/>
<dbReference type="FunCoup" id="C4QGM3">
    <property type="interactions" value="1793"/>
</dbReference>
<dbReference type="STRING" id="6183.C4QGM3"/>
<dbReference type="GeneID" id="8348851"/>
<dbReference type="KEGG" id="smm:Smp_071830"/>
<dbReference type="CTD" id="8348851"/>
<dbReference type="eggNOG" id="KOG3463">
    <property type="taxonomic scope" value="Eukaryota"/>
</dbReference>
<dbReference type="InParanoid" id="C4QGM3"/>
<dbReference type="OrthoDB" id="586585at2759"/>
<dbReference type="Proteomes" id="UP000008854">
    <property type="component" value="Chromosome 2"/>
</dbReference>
<dbReference type="GO" id="GO:0005672">
    <property type="term" value="C:transcription factor TFIIA complex"/>
    <property type="evidence" value="ECO:0007669"/>
    <property type="project" value="InterPro"/>
</dbReference>
<dbReference type="GO" id="GO:0006367">
    <property type="term" value="P:transcription initiation at RNA polymerase II promoter"/>
    <property type="evidence" value="ECO:0007669"/>
    <property type="project" value="InterPro"/>
</dbReference>
<dbReference type="CDD" id="cd10014">
    <property type="entry name" value="TFIIA_gamma_C"/>
    <property type="match status" value="1"/>
</dbReference>
<dbReference type="CDD" id="cd10145">
    <property type="entry name" value="TFIIA_gamma_N"/>
    <property type="match status" value="1"/>
</dbReference>
<dbReference type="Gene3D" id="2.30.18.10">
    <property type="entry name" value="Transcription factor IIA (TFIIA), beta-barrel domain"/>
    <property type="match status" value="1"/>
</dbReference>
<dbReference type="Gene3D" id="1.10.287.190">
    <property type="entry name" value="Transcription factor IIA gamma subunit, alpha-helical domain"/>
    <property type="match status" value="1"/>
</dbReference>
<dbReference type="InterPro" id="IPR009083">
    <property type="entry name" value="TFIIA_a-hlx"/>
</dbReference>
<dbReference type="InterPro" id="IPR009088">
    <property type="entry name" value="TFIIA_b-brl"/>
</dbReference>
<dbReference type="InterPro" id="IPR003194">
    <property type="entry name" value="TFIIA_gsu"/>
</dbReference>
<dbReference type="InterPro" id="IPR015871">
    <property type="entry name" value="TFIIA_gsu_C"/>
</dbReference>
<dbReference type="InterPro" id="IPR015872">
    <property type="entry name" value="TFIIA_gsu_N"/>
</dbReference>
<dbReference type="PANTHER" id="PTHR10966">
    <property type="entry name" value="TRANSCRIPTION INITIATION FACTOR IIA SUBUNIT 2"/>
    <property type="match status" value="1"/>
</dbReference>
<dbReference type="Pfam" id="PF02751">
    <property type="entry name" value="TFIIA_gamma_C"/>
    <property type="match status" value="1"/>
</dbReference>
<dbReference type="Pfam" id="PF02268">
    <property type="entry name" value="TFIIA_gamma_N"/>
    <property type="match status" value="1"/>
</dbReference>
<dbReference type="PIRSF" id="PIRSF009415">
    <property type="entry name" value="Hum_TFIIA_gamma"/>
    <property type="match status" value="1"/>
</dbReference>
<dbReference type="SUPFAM" id="SSF47396">
    <property type="entry name" value="Transcription factor IIA (TFIIA), alpha-helical domain"/>
    <property type="match status" value="1"/>
</dbReference>
<dbReference type="SUPFAM" id="SSF50784">
    <property type="entry name" value="Transcription factor IIA (TFIIA), beta-barrel domain"/>
    <property type="match status" value="1"/>
</dbReference>
<name>T2AG_SCHMA</name>
<keyword id="KW-0539">Nucleus</keyword>
<keyword id="KW-1185">Reference proteome</keyword>
<keyword id="KW-0804">Transcription</keyword>
<keyword id="KW-0805">Transcription regulation</keyword>
<comment type="function">
    <text evidence="1">TFIIA is a component of the transcription machinery of RNA polymerase II and plays an important role in transcriptional activation. TFIIA in a complex with TBP mediates transcriptional activity (By similarity).</text>
</comment>
<comment type="subunit">
    <text evidence="1">TFIIA is a heterodimer of the large unprocessed subunit 1 and a small subunit gamma.</text>
</comment>
<comment type="subcellular location">
    <subcellularLocation>
        <location evidence="1">Nucleus</location>
    </subcellularLocation>
</comment>
<comment type="similarity">
    <text evidence="2">Belongs to the TFIIA subunit 2 family.</text>
</comment>
<comment type="sequence caution" evidence="2">
    <conflict type="erroneous gene model prediction">
        <sequence resource="EMBL-CDS" id="CCD77760"/>
    </conflict>
</comment>
<accession>C4QGM3</accession>
<accession>G4VCY5</accession>
<organism>
    <name type="scientific">Schistosoma mansoni</name>
    <name type="common">Blood fluke</name>
    <dbReference type="NCBI Taxonomy" id="6183"/>
    <lineage>
        <taxon>Eukaryota</taxon>
        <taxon>Metazoa</taxon>
        <taxon>Spiralia</taxon>
        <taxon>Lophotrochozoa</taxon>
        <taxon>Platyhelminthes</taxon>
        <taxon>Trematoda</taxon>
        <taxon>Digenea</taxon>
        <taxon>Strigeidida</taxon>
        <taxon>Schistosomatoidea</taxon>
        <taxon>Schistosomatidae</taxon>
        <taxon>Schistosoma</taxon>
    </lineage>
</organism>